<gene>
    <name type="primary">Art4</name>
    <name type="ORF">GD20747</name>
</gene>
<comment type="function">
    <text evidence="3">Methylates (mono- and asymmetric dimethylation) the guanidino nitrogens of arginyl residues in proteins. May methylate histone H3 at 'Arg-17' and activate transcription via chromatin remodeling (By similarity).</text>
</comment>
<comment type="catalytic activity">
    <reaction evidence="3">
        <text>L-arginyl-[protein] + 2 S-adenosyl-L-methionine = N(omega),N(omega)-dimethyl-L-arginyl-[protein] + 2 S-adenosyl-L-homocysteine + 2 H(+)</text>
        <dbReference type="Rhea" id="RHEA:48096"/>
        <dbReference type="Rhea" id="RHEA-COMP:10532"/>
        <dbReference type="Rhea" id="RHEA-COMP:11991"/>
        <dbReference type="ChEBI" id="CHEBI:15378"/>
        <dbReference type="ChEBI" id="CHEBI:29965"/>
        <dbReference type="ChEBI" id="CHEBI:57856"/>
        <dbReference type="ChEBI" id="CHEBI:59789"/>
        <dbReference type="ChEBI" id="CHEBI:61897"/>
        <dbReference type="EC" id="2.1.1.319"/>
    </reaction>
</comment>
<comment type="subunit">
    <text evidence="1">Homodimer.</text>
</comment>
<comment type="subcellular location">
    <subcellularLocation>
        <location evidence="4">Cytoplasm</location>
    </subcellularLocation>
    <subcellularLocation>
        <location evidence="4">Nucleus</location>
    </subcellularLocation>
</comment>
<comment type="PTM">
    <text evidence="1">The dimethylated protein is the major form.</text>
</comment>
<comment type="similarity">
    <text evidence="5">Belongs to the class I-like SAM-binding methyltransferase superfamily. Protein arginine N-methyltransferase family.</text>
</comment>
<name>CARM1_DROSI</name>
<dbReference type="EC" id="2.1.1.319" evidence="3"/>
<dbReference type="EMBL" id="CM000364">
    <property type="protein sequence ID" value="EDX13546.1"/>
    <property type="molecule type" value="Genomic_DNA"/>
</dbReference>
<dbReference type="SMR" id="B4QVW6"/>
<dbReference type="STRING" id="7240.B4QVW6"/>
<dbReference type="EnsemblMetazoa" id="FBtr0220657">
    <property type="protein sequence ID" value="FBpp0219149"/>
    <property type="gene ID" value="FBgn0192213"/>
</dbReference>
<dbReference type="EnsemblMetazoa" id="XM_002104007.4">
    <property type="protein sequence ID" value="XP_002104043.1"/>
    <property type="gene ID" value="LOC6728707"/>
</dbReference>
<dbReference type="GeneID" id="6728707"/>
<dbReference type="KEGG" id="dsi:Dsimw501_GD20747"/>
<dbReference type="CTD" id="420"/>
<dbReference type="HOGENOM" id="CLU_017375_0_1_1"/>
<dbReference type="OMA" id="GIGDGMD"/>
<dbReference type="OrthoDB" id="7848332at2759"/>
<dbReference type="PhylomeDB" id="B4QVW6"/>
<dbReference type="Proteomes" id="UP000000304">
    <property type="component" value="Chromosome 3R"/>
</dbReference>
<dbReference type="Bgee" id="FBgn0192213">
    <property type="expression patterns" value="Expressed in embryo and 3 other cell types or tissues"/>
</dbReference>
<dbReference type="GO" id="GO:0005737">
    <property type="term" value="C:cytoplasm"/>
    <property type="evidence" value="ECO:0000250"/>
    <property type="project" value="UniProtKB"/>
</dbReference>
<dbReference type="GO" id="GO:0005829">
    <property type="term" value="C:cytosol"/>
    <property type="evidence" value="ECO:0007669"/>
    <property type="project" value="EnsemblMetazoa"/>
</dbReference>
<dbReference type="GO" id="GO:0035097">
    <property type="term" value="C:histone methyltransferase complex"/>
    <property type="evidence" value="ECO:0007669"/>
    <property type="project" value="EnsemblMetazoa"/>
</dbReference>
<dbReference type="GO" id="GO:0005634">
    <property type="term" value="C:nucleus"/>
    <property type="evidence" value="ECO:0000250"/>
    <property type="project" value="UniProtKB"/>
</dbReference>
<dbReference type="GO" id="GO:0035642">
    <property type="term" value="F:histone H3R17 methyltransferase activity"/>
    <property type="evidence" value="ECO:0000250"/>
    <property type="project" value="UniProtKB"/>
</dbReference>
<dbReference type="GO" id="GO:0070611">
    <property type="term" value="F:histone H3R2 methyltransferase activity"/>
    <property type="evidence" value="ECO:0000250"/>
    <property type="project" value="UniProtKB"/>
</dbReference>
<dbReference type="GO" id="GO:0140903">
    <property type="term" value="F:histone H3R26 methyltransferase activity"/>
    <property type="evidence" value="ECO:0000250"/>
    <property type="project" value="UniProtKB"/>
</dbReference>
<dbReference type="GO" id="GO:0035242">
    <property type="term" value="F:protein-arginine omega-N asymmetric methyltransferase activity"/>
    <property type="evidence" value="ECO:0000250"/>
    <property type="project" value="UniProtKB"/>
</dbReference>
<dbReference type="GO" id="GO:0035241">
    <property type="term" value="F:protein-arginine omega-N monomethyltransferase activity"/>
    <property type="evidence" value="ECO:0000250"/>
    <property type="project" value="UniProtKB"/>
</dbReference>
<dbReference type="GO" id="GO:0006338">
    <property type="term" value="P:chromatin remodeling"/>
    <property type="evidence" value="ECO:0000250"/>
    <property type="project" value="UniProtKB"/>
</dbReference>
<dbReference type="GO" id="GO:0019919">
    <property type="term" value="P:peptidyl-arginine methylation, to asymmetrical-dimethyl arginine"/>
    <property type="evidence" value="ECO:0000250"/>
    <property type="project" value="UniProtKB"/>
</dbReference>
<dbReference type="GO" id="GO:0120142">
    <property type="term" value="P:positive regulation of ecdysone receptor signaling pathway"/>
    <property type="evidence" value="ECO:0007669"/>
    <property type="project" value="EnsemblMetazoa"/>
</dbReference>
<dbReference type="GO" id="GO:0045944">
    <property type="term" value="P:positive regulation of transcription by RNA polymerase II"/>
    <property type="evidence" value="ECO:0007669"/>
    <property type="project" value="EnsemblMetazoa"/>
</dbReference>
<dbReference type="GO" id="GO:0006355">
    <property type="term" value="P:regulation of DNA-templated transcription"/>
    <property type="evidence" value="ECO:0000250"/>
    <property type="project" value="UniProtKB"/>
</dbReference>
<dbReference type="CDD" id="cd02440">
    <property type="entry name" value="AdoMet_MTases"/>
    <property type="match status" value="1"/>
</dbReference>
<dbReference type="FunFam" id="2.30.29.30:FF:000449">
    <property type="entry name" value="Histone-arginine methyltransferase CARMER"/>
    <property type="match status" value="1"/>
</dbReference>
<dbReference type="FunFam" id="2.70.160.11:FF:000002">
    <property type="entry name" value="Probable histone-arginine methyltransferase CARM1"/>
    <property type="match status" value="1"/>
</dbReference>
<dbReference type="FunFam" id="3.40.50.150:FF:000031">
    <property type="entry name" value="Putative Histone-arginine methyltransferase CARM1"/>
    <property type="match status" value="1"/>
</dbReference>
<dbReference type="Gene3D" id="2.70.160.11">
    <property type="entry name" value="Hnrnp arginine n-methyltransferase1"/>
    <property type="match status" value="1"/>
</dbReference>
<dbReference type="Gene3D" id="2.30.29.30">
    <property type="entry name" value="Pleckstrin-homology domain (PH domain)/Phosphotyrosine-binding domain (PTB)"/>
    <property type="match status" value="1"/>
</dbReference>
<dbReference type="Gene3D" id="3.40.50.150">
    <property type="entry name" value="Vaccinia Virus protein VP39"/>
    <property type="match status" value="1"/>
</dbReference>
<dbReference type="InterPro" id="IPR025799">
    <property type="entry name" value="Arg_MeTrfase"/>
</dbReference>
<dbReference type="InterPro" id="IPR011993">
    <property type="entry name" value="PH-like_dom_sf"/>
</dbReference>
<dbReference type="InterPro" id="IPR055135">
    <property type="entry name" value="PRMT_dom"/>
</dbReference>
<dbReference type="InterPro" id="IPR029063">
    <property type="entry name" value="SAM-dependent_MTases_sf"/>
</dbReference>
<dbReference type="PANTHER" id="PTHR11006:SF10">
    <property type="entry name" value="HISTONE-ARGININE METHYLTRANSFERASE CARMER-RELATED"/>
    <property type="match status" value="1"/>
</dbReference>
<dbReference type="PANTHER" id="PTHR11006">
    <property type="entry name" value="PROTEIN ARGININE N-METHYLTRANSFERASE"/>
    <property type="match status" value="1"/>
</dbReference>
<dbReference type="Pfam" id="PF06325">
    <property type="entry name" value="PrmA"/>
    <property type="match status" value="1"/>
</dbReference>
<dbReference type="Pfam" id="PF22528">
    <property type="entry name" value="PRMT_C"/>
    <property type="match status" value="1"/>
</dbReference>
<dbReference type="SUPFAM" id="SSF53335">
    <property type="entry name" value="S-adenosyl-L-methionine-dependent methyltransferases"/>
    <property type="match status" value="1"/>
</dbReference>
<dbReference type="PROSITE" id="PS51678">
    <property type="entry name" value="SAM_MT_PRMT"/>
    <property type="match status" value="1"/>
</dbReference>
<feature type="chain" id="PRO_0000382228" description="Histone-arginine methyltransferase CARMER">
    <location>
        <begin position="1"/>
        <end position="530"/>
    </location>
</feature>
<feature type="domain" description="SAM-dependent MTase PRMT-type" evidence="5">
    <location>
        <begin position="141"/>
        <end position="450"/>
    </location>
</feature>
<feature type="binding site" evidence="2">
    <location>
        <position position="154"/>
    </location>
    <ligand>
        <name>S-adenosyl-L-methionine</name>
        <dbReference type="ChEBI" id="CHEBI:59789"/>
    </ligand>
</feature>
<feature type="binding site" evidence="2">
    <location>
        <position position="163"/>
    </location>
    <ligand>
        <name>S-adenosyl-L-methionine</name>
        <dbReference type="ChEBI" id="CHEBI:59789"/>
    </ligand>
</feature>
<feature type="binding site" evidence="2">
    <location>
        <position position="187"/>
    </location>
    <ligand>
        <name>S-adenosyl-L-methionine</name>
        <dbReference type="ChEBI" id="CHEBI:59789"/>
    </ligand>
</feature>
<feature type="binding site" evidence="2">
    <location>
        <position position="209"/>
    </location>
    <ligand>
        <name>S-adenosyl-L-methionine</name>
        <dbReference type="ChEBI" id="CHEBI:59789"/>
    </ligand>
</feature>
<feature type="binding site" evidence="2">
    <location>
        <position position="238"/>
    </location>
    <ligand>
        <name>S-adenosyl-L-methionine</name>
        <dbReference type="ChEBI" id="CHEBI:59789"/>
    </ligand>
</feature>
<feature type="binding site" evidence="1">
    <location>
        <position position="266"/>
    </location>
    <ligand>
        <name>S-adenosyl-L-methionine</name>
        <dbReference type="ChEBI" id="CHEBI:59789"/>
    </ligand>
</feature>
<feature type="modified residue" description="Asymmetric dimethylarginine; by autocatalysis" evidence="3">
    <location>
        <position position="501"/>
    </location>
</feature>
<keyword id="KW-0156">Chromatin regulator</keyword>
<keyword id="KW-0963">Cytoplasm</keyword>
<keyword id="KW-0488">Methylation</keyword>
<keyword id="KW-0489">Methyltransferase</keyword>
<keyword id="KW-0539">Nucleus</keyword>
<keyword id="KW-1185">Reference proteome</keyword>
<keyword id="KW-0949">S-adenosyl-L-methionine</keyword>
<keyword id="KW-0804">Transcription</keyword>
<keyword id="KW-0805">Transcription regulation</keyword>
<keyword id="KW-0808">Transferase</keyword>
<organism>
    <name type="scientific">Drosophila simulans</name>
    <name type="common">Fruit fly</name>
    <dbReference type="NCBI Taxonomy" id="7240"/>
    <lineage>
        <taxon>Eukaryota</taxon>
        <taxon>Metazoa</taxon>
        <taxon>Ecdysozoa</taxon>
        <taxon>Arthropoda</taxon>
        <taxon>Hexapoda</taxon>
        <taxon>Insecta</taxon>
        <taxon>Pterygota</taxon>
        <taxon>Neoptera</taxon>
        <taxon>Endopterygota</taxon>
        <taxon>Diptera</taxon>
        <taxon>Brachycera</taxon>
        <taxon>Muscomorpha</taxon>
        <taxon>Ephydroidea</taxon>
        <taxon>Drosophilidae</taxon>
        <taxon>Drosophila</taxon>
        <taxon>Sophophora</taxon>
    </lineage>
</organism>
<sequence>MSSLRPDEARKLATAASVSPLSNCQFCGVVISSIADEQKLEFTNKYKGSCTLLCSYDSQGVVLRVVSDDDRSHVLKEYMIAADTDAAQMGRRSYAVSLDADNLVLRFGSEQDQQLFRKVVENVKHLRPKSVFSQRTEESSASQYFQFYGYLSQQQNMMQDYVRTSTYQRAILGNAVDFQDKIVLDVGAGSGILSFFAVQAGAAKVYAIEASNMAQYAQQLVESNNVQHKISVIPGKIEEIELPEKVDVIISEPMGYMLYNERMLETYLHARKWLKPQGKMYPTHGDLHIAPFSDESLYSEQYNKANFWYQSAFHGVDLTTLHKEGMKEYFRQPIVDTFDIRICMAKSVRHVCDFLNDKEDDLHLISIPLEFHILQTGICHGLAFWFDVEFSGSSQNVWLSTSPTAPLTHWYQVRCLLPMPIFIKQGQTLTGRVLLEANRRQSYDVTIDLHIEGTLISSSNTLDLKNPYFRYTGAPVQAPPGTSTQSPSEQYWTQVDTQGSRNSSSMLNGGLSVNGIGDGMDITHGLMHPH</sequence>
<reference evidence="6" key="1">
    <citation type="journal article" date="2007" name="Nature">
        <title>Evolution of genes and genomes on the Drosophila phylogeny.</title>
        <authorList>
            <consortium name="Drosophila 12 genomes consortium"/>
        </authorList>
    </citation>
    <scope>NUCLEOTIDE SEQUENCE [LARGE SCALE GENOMIC DNA]</scope>
</reference>
<proteinExistence type="inferred from homology"/>
<evidence type="ECO:0000250" key="1"/>
<evidence type="ECO:0000250" key="2">
    <source>
        <dbReference type="UniProtKB" id="Q63009"/>
    </source>
</evidence>
<evidence type="ECO:0000250" key="3">
    <source>
        <dbReference type="UniProtKB" id="Q7Q2B7"/>
    </source>
</evidence>
<evidence type="ECO:0000250" key="4">
    <source>
        <dbReference type="UniProtKB" id="Q9VH48"/>
    </source>
</evidence>
<evidence type="ECO:0000255" key="5">
    <source>
        <dbReference type="PROSITE-ProRule" id="PRU01015"/>
    </source>
</evidence>
<evidence type="ECO:0000312" key="6">
    <source>
        <dbReference type="EMBL" id="EDX13546.1"/>
    </source>
</evidence>
<protein>
    <recommendedName>
        <fullName evidence="3">Histone-arginine methyltransferase CARMER</fullName>
        <ecNumber evidence="3">2.1.1.319</ecNumber>
    </recommendedName>
</protein>
<accession>B4QVW6</accession>